<comment type="function">
    <text evidence="1">This protein specifically catalyzes the removal of signal peptides from prolipoproteins.</text>
</comment>
<comment type="catalytic activity">
    <reaction evidence="1">
        <text>Release of signal peptides from bacterial membrane prolipoproteins. Hydrolyzes -Xaa-Yaa-Zaa-|-(S,diacylglyceryl)Cys-, in which Xaa is hydrophobic (preferably Leu), and Yaa (Ala or Ser) and Zaa (Gly or Ala) have small, neutral side chains.</text>
        <dbReference type="EC" id="3.4.23.36"/>
    </reaction>
</comment>
<comment type="pathway">
    <text evidence="1">Protein modification; lipoprotein biosynthesis (signal peptide cleavage).</text>
</comment>
<comment type="subcellular location">
    <subcellularLocation>
        <location evidence="1">Cell inner membrane</location>
        <topology evidence="1">Multi-pass membrane protein</topology>
    </subcellularLocation>
</comment>
<comment type="similarity">
    <text evidence="1">Belongs to the peptidase A8 family.</text>
</comment>
<proteinExistence type="inferred from homology"/>
<evidence type="ECO:0000255" key="1">
    <source>
        <dbReference type="HAMAP-Rule" id="MF_00161"/>
    </source>
</evidence>
<protein>
    <recommendedName>
        <fullName evidence="1">Lipoprotein signal peptidase</fullName>
        <ecNumber evidence="1">3.4.23.36</ecNumber>
    </recommendedName>
    <alternativeName>
        <fullName evidence="1">Prolipoprotein signal peptidase</fullName>
    </alternativeName>
    <alternativeName>
        <fullName evidence="1">Signal peptidase II</fullName>
        <shortName evidence="1">SPase II</shortName>
    </alternativeName>
</protein>
<organism>
    <name type="scientific">Shigella flexneri serotype 5b (strain 8401)</name>
    <dbReference type="NCBI Taxonomy" id="373384"/>
    <lineage>
        <taxon>Bacteria</taxon>
        <taxon>Pseudomonadati</taxon>
        <taxon>Pseudomonadota</taxon>
        <taxon>Gammaproteobacteria</taxon>
        <taxon>Enterobacterales</taxon>
        <taxon>Enterobacteriaceae</taxon>
        <taxon>Shigella</taxon>
    </lineage>
</organism>
<dbReference type="EC" id="3.4.23.36" evidence="1"/>
<dbReference type="EMBL" id="CP000266">
    <property type="protein sequence ID" value="ABF02309.1"/>
    <property type="molecule type" value="Genomic_DNA"/>
</dbReference>
<dbReference type="RefSeq" id="WP_000083366.1">
    <property type="nucleotide sequence ID" value="NC_008258.1"/>
</dbReference>
<dbReference type="SMR" id="Q0T8G7"/>
<dbReference type="MEROPS" id="A08.001"/>
<dbReference type="KEGG" id="sfv:SFV_0021"/>
<dbReference type="HOGENOM" id="CLU_083252_4_0_6"/>
<dbReference type="UniPathway" id="UPA00665"/>
<dbReference type="Proteomes" id="UP000000659">
    <property type="component" value="Chromosome"/>
</dbReference>
<dbReference type="GO" id="GO:0005886">
    <property type="term" value="C:plasma membrane"/>
    <property type="evidence" value="ECO:0007669"/>
    <property type="project" value="UniProtKB-SubCell"/>
</dbReference>
<dbReference type="GO" id="GO:0004190">
    <property type="term" value="F:aspartic-type endopeptidase activity"/>
    <property type="evidence" value="ECO:0007669"/>
    <property type="project" value="UniProtKB-UniRule"/>
</dbReference>
<dbReference type="GO" id="GO:0006508">
    <property type="term" value="P:proteolysis"/>
    <property type="evidence" value="ECO:0007669"/>
    <property type="project" value="UniProtKB-KW"/>
</dbReference>
<dbReference type="HAMAP" id="MF_00161">
    <property type="entry name" value="LspA"/>
    <property type="match status" value="1"/>
</dbReference>
<dbReference type="InterPro" id="IPR001872">
    <property type="entry name" value="Peptidase_A8"/>
</dbReference>
<dbReference type="NCBIfam" id="TIGR00077">
    <property type="entry name" value="lspA"/>
    <property type="match status" value="1"/>
</dbReference>
<dbReference type="PANTHER" id="PTHR33695">
    <property type="entry name" value="LIPOPROTEIN SIGNAL PEPTIDASE"/>
    <property type="match status" value="1"/>
</dbReference>
<dbReference type="PANTHER" id="PTHR33695:SF1">
    <property type="entry name" value="LIPOPROTEIN SIGNAL PEPTIDASE"/>
    <property type="match status" value="1"/>
</dbReference>
<dbReference type="Pfam" id="PF01252">
    <property type="entry name" value="Peptidase_A8"/>
    <property type="match status" value="1"/>
</dbReference>
<dbReference type="PRINTS" id="PR00781">
    <property type="entry name" value="LIPOSIGPTASE"/>
</dbReference>
<dbReference type="PROSITE" id="PS00855">
    <property type="entry name" value="SPASE_II"/>
    <property type="match status" value="1"/>
</dbReference>
<name>LSPA_SHIF8</name>
<keyword id="KW-0064">Aspartyl protease</keyword>
<keyword id="KW-0997">Cell inner membrane</keyword>
<keyword id="KW-1003">Cell membrane</keyword>
<keyword id="KW-0378">Hydrolase</keyword>
<keyword id="KW-0472">Membrane</keyword>
<keyword id="KW-0645">Protease</keyword>
<keyword id="KW-0812">Transmembrane</keyword>
<keyword id="KW-1133">Transmembrane helix</keyword>
<accession>Q0T8G7</accession>
<sequence>MSQSICSTGLRWLWLVVIVLIIDLGSKYLILQNFALGDTVPLFPSLNLHASAYYGAAFSFLADSGGWQRWFFAGIAIGISVLLAVMMYRSKATQKLNNIAYALIIGGALGNLFDRLWHGFVVDMIDFYVGDWHFATFNLADTAICVGAALIVLEGFLPSKAKKQ</sequence>
<gene>
    <name evidence="1" type="primary">lspA</name>
    <name type="ordered locus">SFV_0021</name>
</gene>
<feature type="chain" id="PRO_0000289426" description="Lipoprotein signal peptidase">
    <location>
        <begin position="1"/>
        <end position="164"/>
    </location>
</feature>
<feature type="transmembrane region" description="Helical" evidence="1">
    <location>
        <begin position="12"/>
        <end position="32"/>
    </location>
</feature>
<feature type="transmembrane region" description="Helical" evidence="1">
    <location>
        <begin position="42"/>
        <end position="62"/>
    </location>
</feature>
<feature type="transmembrane region" description="Helical" evidence="1">
    <location>
        <begin position="70"/>
        <end position="90"/>
    </location>
</feature>
<feature type="transmembrane region" description="Helical" evidence="1">
    <location>
        <begin position="102"/>
        <end position="122"/>
    </location>
</feature>
<feature type="transmembrane region" description="Helical" evidence="1">
    <location>
        <begin position="137"/>
        <end position="157"/>
    </location>
</feature>
<feature type="active site" evidence="1">
    <location>
        <position position="123"/>
    </location>
</feature>
<feature type="active site" evidence="1">
    <location>
        <position position="141"/>
    </location>
</feature>
<reference key="1">
    <citation type="journal article" date="2006" name="BMC Genomics">
        <title>Complete genome sequence of Shigella flexneri 5b and comparison with Shigella flexneri 2a.</title>
        <authorList>
            <person name="Nie H."/>
            <person name="Yang F."/>
            <person name="Zhang X."/>
            <person name="Yang J."/>
            <person name="Chen L."/>
            <person name="Wang J."/>
            <person name="Xiong Z."/>
            <person name="Peng J."/>
            <person name="Sun L."/>
            <person name="Dong J."/>
            <person name="Xue Y."/>
            <person name="Xu X."/>
            <person name="Chen S."/>
            <person name="Yao Z."/>
            <person name="Shen Y."/>
            <person name="Jin Q."/>
        </authorList>
    </citation>
    <scope>NUCLEOTIDE SEQUENCE [LARGE SCALE GENOMIC DNA]</scope>
    <source>
        <strain>8401</strain>
    </source>
</reference>